<protein>
    <recommendedName>
        <fullName>Serine/threonine-protein kinase 40</fullName>
        <ecNumber>2.7.11.1</ecNumber>
    </recommendedName>
    <alternativeName>
        <fullName>Serine/threonine-protein kinase lyk4</fullName>
    </alternativeName>
</protein>
<comment type="function">
    <text evidence="1">May be a negative regulator of NF-kappa-B and p53-mediated gene transcription.</text>
</comment>
<comment type="catalytic activity">
    <reaction>
        <text>L-seryl-[protein] + ATP = O-phospho-L-seryl-[protein] + ADP + H(+)</text>
        <dbReference type="Rhea" id="RHEA:17989"/>
        <dbReference type="Rhea" id="RHEA-COMP:9863"/>
        <dbReference type="Rhea" id="RHEA-COMP:11604"/>
        <dbReference type="ChEBI" id="CHEBI:15378"/>
        <dbReference type="ChEBI" id="CHEBI:29999"/>
        <dbReference type="ChEBI" id="CHEBI:30616"/>
        <dbReference type="ChEBI" id="CHEBI:83421"/>
        <dbReference type="ChEBI" id="CHEBI:456216"/>
        <dbReference type="EC" id="2.7.11.1"/>
    </reaction>
</comment>
<comment type="catalytic activity">
    <reaction>
        <text>L-threonyl-[protein] + ATP = O-phospho-L-threonyl-[protein] + ADP + H(+)</text>
        <dbReference type="Rhea" id="RHEA:46608"/>
        <dbReference type="Rhea" id="RHEA-COMP:11060"/>
        <dbReference type="Rhea" id="RHEA-COMP:11605"/>
        <dbReference type="ChEBI" id="CHEBI:15378"/>
        <dbReference type="ChEBI" id="CHEBI:30013"/>
        <dbReference type="ChEBI" id="CHEBI:30616"/>
        <dbReference type="ChEBI" id="CHEBI:61977"/>
        <dbReference type="ChEBI" id="CHEBI:456216"/>
        <dbReference type="EC" id="2.7.11.1"/>
    </reaction>
</comment>
<comment type="subcellular location">
    <subcellularLocation>
        <location evidence="1">Nucleus</location>
    </subcellularLocation>
    <subcellularLocation>
        <location evidence="1">Cytoplasm</location>
    </subcellularLocation>
</comment>
<comment type="similarity">
    <text evidence="4">Belongs to the protein kinase superfamily. CAMK Ser/Thr protein kinase family.</text>
</comment>
<feature type="chain" id="PRO_0000252264" description="Serine/threonine-protein kinase 40">
    <location>
        <begin position="1"/>
        <end position="435"/>
    </location>
</feature>
<feature type="domain" description="Protein kinase" evidence="2">
    <location>
        <begin position="35"/>
        <end position="332"/>
    </location>
</feature>
<feature type="active site" description="Proton acceptor" evidence="2 3">
    <location>
        <position position="197"/>
    </location>
</feature>
<feature type="binding site" evidence="2">
    <location>
        <begin position="41"/>
        <end position="49"/>
    </location>
    <ligand>
        <name>ATP</name>
        <dbReference type="ChEBI" id="CHEBI:30616"/>
    </ligand>
</feature>
<feature type="binding site" evidence="2">
    <location>
        <position position="66"/>
    </location>
    <ligand>
        <name>ATP</name>
        <dbReference type="ChEBI" id="CHEBI:30616"/>
    </ligand>
</feature>
<feature type="sequence conflict" description="In Ref. 2; AAI00063." evidence="4" ref="2">
    <original>A</original>
    <variation>T</variation>
    <location>
        <position position="397"/>
    </location>
</feature>
<sequence length="435" mass="48960">MKRRASDRGAGETSAKAQALGTGIAGNNAKRAGPFILGPRLGNSPVPSIVQCLARKDGTDDFYQLKILTLEERGEQGIESQEERQGKMLLHTEYSLLSLLHTQDGVVHHHGLFQDRTCEAVEDTESGRMVKKMKKRICLVLDCLCAHDFSDKTADLINLQHYVIKEKRLSERETVVIFYDVVRVVEALHQKNIVHRDLKLGNMVLNKRTHRITITNFCLGKHLVSEGDLLKDQRGSPAYISPDVLSGRPYRGKPSDMWALGVVLFTMLYGQFPFYDSIPQELFRKIKAAEYTIPEDGRVSENTVCLIRKLLVLDPQQRLAAADVLEALSAIIASWQSLSSLSGPLQVVPDIDDQMSSSDSSQEAKVTEECSQYEFENYMRQQLLLAEEKSSIHEARAWVPKRQFGSMPPVRRLGHDAQPMTSLDTAILAQRYLRK</sequence>
<evidence type="ECO:0000250" key="1"/>
<evidence type="ECO:0000255" key="2">
    <source>
        <dbReference type="PROSITE-ProRule" id="PRU00159"/>
    </source>
</evidence>
<evidence type="ECO:0000255" key="3">
    <source>
        <dbReference type="PROSITE-ProRule" id="PRU10027"/>
    </source>
</evidence>
<evidence type="ECO:0000305" key="4"/>
<accession>Q7TNL4</accession>
<accession>Q498V1</accession>
<proteinExistence type="evidence at transcript level"/>
<dbReference type="EC" id="2.7.11.1"/>
<dbReference type="EMBL" id="AY336055">
    <property type="protein sequence ID" value="AAQ01589.1"/>
    <property type="molecule type" value="mRNA"/>
</dbReference>
<dbReference type="EMBL" id="BC100062">
    <property type="protein sequence ID" value="AAI00063.1"/>
    <property type="molecule type" value="mRNA"/>
</dbReference>
<dbReference type="RefSeq" id="NP_898879.2">
    <property type="nucleotide sequence ID" value="NM_183056.2"/>
</dbReference>
<dbReference type="RefSeq" id="XP_006238943.1">
    <property type="nucleotide sequence ID" value="XM_006238881.3"/>
</dbReference>
<dbReference type="SMR" id="Q7TNL4"/>
<dbReference type="FunCoup" id="Q7TNL4">
    <property type="interactions" value="1049"/>
</dbReference>
<dbReference type="STRING" id="10116.ENSRNOP00000032827"/>
<dbReference type="PhosphoSitePlus" id="Q7TNL4"/>
<dbReference type="PaxDb" id="10116-ENSRNOP00000032827"/>
<dbReference type="GeneID" id="360230"/>
<dbReference type="KEGG" id="rno:360230"/>
<dbReference type="UCSC" id="RGD:727884">
    <property type="organism name" value="rat"/>
</dbReference>
<dbReference type="AGR" id="RGD:727884"/>
<dbReference type="CTD" id="83931"/>
<dbReference type="RGD" id="727884">
    <property type="gene designation" value="Stk40"/>
</dbReference>
<dbReference type="eggNOG" id="KOG0583">
    <property type="taxonomic scope" value="Eukaryota"/>
</dbReference>
<dbReference type="InParanoid" id="Q7TNL4"/>
<dbReference type="OrthoDB" id="410920at2759"/>
<dbReference type="PhylomeDB" id="Q7TNL4"/>
<dbReference type="PRO" id="PR:Q7TNL4"/>
<dbReference type="Proteomes" id="UP000002494">
    <property type="component" value="Unplaced"/>
</dbReference>
<dbReference type="GO" id="GO:0005737">
    <property type="term" value="C:cytoplasm"/>
    <property type="evidence" value="ECO:0007669"/>
    <property type="project" value="UniProtKB-SubCell"/>
</dbReference>
<dbReference type="GO" id="GO:0005634">
    <property type="term" value="C:nucleus"/>
    <property type="evidence" value="ECO:0007669"/>
    <property type="project" value="UniProtKB-SubCell"/>
</dbReference>
<dbReference type="GO" id="GO:0005524">
    <property type="term" value="F:ATP binding"/>
    <property type="evidence" value="ECO:0007669"/>
    <property type="project" value="UniProtKB-KW"/>
</dbReference>
<dbReference type="GO" id="GO:0106310">
    <property type="term" value="F:protein serine kinase activity"/>
    <property type="evidence" value="ECO:0007669"/>
    <property type="project" value="RHEA"/>
</dbReference>
<dbReference type="GO" id="GO:0004674">
    <property type="term" value="F:protein serine/threonine kinase activity"/>
    <property type="evidence" value="ECO:0007669"/>
    <property type="project" value="UniProtKB-KW"/>
</dbReference>
<dbReference type="GO" id="GO:0005977">
    <property type="term" value="P:glycogen metabolic process"/>
    <property type="evidence" value="ECO:0000266"/>
    <property type="project" value="RGD"/>
</dbReference>
<dbReference type="GO" id="GO:0048286">
    <property type="term" value="P:lung alveolus development"/>
    <property type="evidence" value="ECO:0000266"/>
    <property type="project" value="RGD"/>
</dbReference>
<dbReference type="GO" id="GO:0030324">
    <property type="term" value="P:lung development"/>
    <property type="evidence" value="ECO:0000266"/>
    <property type="project" value="RGD"/>
</dbReference>
<dbReference type="GO" id="GO:0060425">
    <property type="term" value="P:lung morphogenesis"/>
    <property type="evidence" value="ECO:0000266"/>
    <property type="project" value="RGD"/>
</dbReference>
<dbReference type="GO" id="GO:0035264">
    <property type="term" value="P:multicellular organism growth"/>
    <property type="evidence" value="ECO:0000266"/>
    <property type="project" value="RGD"/>
</dbReference>
<dbReference type="GO" id="GO:0043066">
    <property type="term" value="P:negative regulation of apoptotic process"/>
    <property type="evidence" value="ECO:0000266"/>
    <property type="project" value="RGD"/>
</dbReference>
<dbReference type="GO" id="GO:0010468">
    <property type="term" value="P:regulation of gene expression"/>
    <property type="evidence" value="ECO:0000266"/>
    <property type="project" value="RGD"/>
</dbReference>
<dbReference type="GO" id="GO:0043408">
    <property type="term" value="P:regulation of MAPK cascade"/>
    <property type="evidence" value="ECO:0000266"/>
    <property type="project" value="RGD"/>
</dbReference>
<dbReference type="GO" id="GO:0003016">
    <property type="term" value="P:respiratory system process"/>
    <property type="evidence" value="ECO:0000266"/>
    <property type="project" value="RGD"/>
</dbReference>
<dbReference type="CDD" id="cd13974">
    <property type="entry name" value="STKc_SHIK"/>
    <property type="match status" value="1"/>
</dbReference>
<dbReference type="FunFam" id="1.10.510.10:FF:000269">
    <property type="entry name" value="Serine/threonine-protein kinase 40"/>
    <property type="match status" value="1"/>
</dbReference>
<dbReference type="Gene3D" id="1.10.510.10">
    <property type="entry name" value="Transferase(Phosphotransferase) domain 1"/>
    <property type="match status" value="1"/>
</dbReference>
<dbReference type="InterPro" id="IPR011009">
    <property type="entry name" value="Kinase-like_dom_sf"/>
</dbReference>
<dbReference type="InterPro" id="IPR000719">
    <property type="entry name" value="Prot_kinase_dom"/>
</dbReference>
<dbReference type="InterPro" id="IPR024236">
    <property type="entry name" value="Ser/Thr_kinase_40"/>
</dbReference>
<dbReference type="InterPro" id="IPR008271">
    <property type="entry name" value="Ser/Thr_kinase_AS"/>
</dbReference>
<dbReference type="InterPro" id="IPR024104">
    <property type="entry name" value="Tribbles/Ser_Thr_kinase_40"/>
</dbReference>
<dbReference type="PANTHER" id="PTHR22961">
    <property type="entry name" value="SER/THR PROTEIN KINASE-TRB"/>
    <property type="match status" value="1"/>
</dbReference>
<dbReference type="PANTHER" id="PTHR22961:SF16">
    <property type="entry name" value="SERINE_THREONINE-PROTEIN KINASE 40"/>
    <property type="match status" value="1"/>
</dbReference>
<dbReference type="Pfam" id="PF00069">
    <property type="entry name" value="Pkinase"/>
    <property type="match status" value="1"/>
</dbReference>
<dbReference type="SMART" id="SM00220">
    <property type="entry name" value="S_TKc"/>
    <property type="match status" value="1"/>
</dbReference>
<dbReference type="SUPFAM" id="SSF56112">
    <property type="entry name" value="Protein kinase-like (PK-like)"/>
    <property type="match status" value="1"/>
</dbReference>
<dbReference type="PROSITE" id="PS50011">
    <property type="entry name" value="PROTEIN_KINASE_DOM"/>
    <property type="match status" value="1"/>
</dbReference>
<dbReference type="PROSITE" id="PS00108">
    <property type="entry name" value="PROTEIN_KINASE_ST"/>
    <property type="match status" value="1"/>
</dbReference>
<reference key="1">
    <citation type="submission" date="2003-07" db="EMBL/GenBank/DDBJ databases">
        <title>Cloning and characterization of human, mouse, rat, chick and frog lyk4 gene.</title>
        <authorList>
            <person name="Shan Y.X."/>
            <person name="Yu L."/>
        </authorList>
    </citation>
    <scope>NUCLEOTIDE SEQUENCE [MRNA]</scope>
    <source>
        <strain>Sprague-Dawley</strain>
        <tissue>Placenta</tissue>
    </source>
</reference>
<reference key="2">
    <citation type="journal article" date="2004" name="Genome Res.">
        <title>The status, quality, and expansion of the NIH full-length cDNA project: the Mammalian Gene Collection (MGC).</title>
        <authorList>
            <consortium name="The MGC Project Team"/>
        </authorList>
    </citation>
    <scope>NUCLEOTIDE SEQUENCE [LARGE SCALE MRNA]</scope>
    <source>
        <tissue>Lung</tissue>
    </source>
</reference>
<organism>
    <name type="scientific">Rattus norvegicus</name>
    <name type="common">Rat</name>
    <dbReference type="NCBI Taxonomy" id="10116"/>
    <lineage>
        <taxon>Eukaryota</taxon>
        <taxon>Metazoa</taxon>
        <taxon>Chordata</taxon>
        <taxon>Craniata</taxon>
        <taxon>Vertebrata</taxon>
        <taxon>Euteleostomi</taxon>
        <taxon>Mammalia</taxon>
        <taxon>Eutheria</taxon>
        <taxon>Euarchontoglires</taxon>
        <taxon>Glires</taxon>
        <taxon>Rodentia</taxon>
        <taxon>Myomorpha</taxon>
        <taxon>Muroidea</taxon>
        <taxon>Muridae</taxon>
        <taxon>Murinae</taxon>
        <taxon>Rattus</taxon>
    </lineage>
</organism>
<gene>
    <name type="primary">Stk40</name>
    <name type="synonym">Lyk4</name>
</gene>
<keyword id="KW-0067">ATP-binding</keyword>
<keyword id="KW-0963">Cytoplasm</keyword>
<keyword id="KW-0418">Kinase</keyword>
<keyword id="KW-0547">Nucleotide-binding</keyword>
<keyword id="KW-0539">Nucleus</keyword>
<keyword id="KW-1185">Reference proteome</keyword>
<keyword id="KW-0723">Serine/threonine-protein kinase</keyword>
<keyword id="KW-0808">Transferase</keyword>
<name>STK40_RAT</name>